<gene>
    <name evidence="1" type="primary">aroQ</name>
    <name type="ordered locus">TRQ2_0586</name>
</gene>
<accession>B1L9E1</accession>
<evidence type="ECO:0000255" key="1">
    <source>
        <dbReference type="HAMAP-Rule" id="MF_00169"/>
    </source>
</evidence>
<feature type="chain" id="PRO_1000097629" description="3-dehydroquinate dehydratase">
    <location>
        <begin position="1"/>
        <end position="144"/>
    </location>
</feature>
<feature type="active site" description="Proton acceptor" evidence="1">
    <location>
        <position position="22"/>
    </location>
</feature>
<feature type="active site" description="Proton donor" evidence="1">
    <location>
        <position position="97"/>
    </location>
</feature>
<feature type="binding site" evidence="1">
    <location>
        <position position="71"/>
    </location>
    <ligand>
        <name>substrate</name>
    </ligand>
</feature>
<feature type="binding site" evidence="1">
    <location>
        <position position="77"/>
    </location>
    <ligand>
        <name>substrate</name>
    </ligand>
</feature>
<feature type="binding site" evidence="1">
    <location>
        <position position="84"/>
    </location>
    <ligand>
        <name>substrate</name>
    </ligand>
</feature>
<feature type="binding site" evidence="1">
    <location>
        <begin position="98"/>
        <end position="99"/>
    </location>
    <ligand>
        <name>substrate</name>
    </ligand>
</feature>
<feature type="binding site" evidence="1">
    <location>
        <position position="108"/>
    </location>
    <ligand>
        <name>substrate</name>
    </ligand>
</feature>
<feature type="site" description="Transition state stabilizer" evidence="1">
    <location>
        <position position="17"/>
    </location>
</feature>
<reference key="1">
    <citation type="journal article" date="2011" name="J. Bacteriol.">
        <title>Genome sequence of Thermotoga sp. strain RQ2, a hyperthermophilic bacterium isolated from a geothermally heated region of the seafloor near Ribeira Quente, the Azores.</title>
        <authorList>
            <person name="Swithers K.S."/>
            <person name="DiPippo J.L."/>
            <person name="Bruce D.C."/>
            <person name="Detter C."/>
            <person name="Tapia R."/>
            <person name="Han S."/>
            <person name="Saunders E."/>
            <person name="Goodwin L.A."/>
            <person name="Han J."/>
            <person name="Woyke T."/>
            <person name="Pitluck S."/>
            <person name="Pennacchio L."/>
            <person name="Nolan M."/>
            <person name="Mikhailova N."/>
            <person name="Lykidis A."/>
            <person name="Land M.L."/>
            <person name="Brettin T."/>
            <person name="Stetter K.O."/>
            <person name="Nelson K.E."/>
            <person name="Gogarten J.P."/>
            <person name="Noll K.M."/>
        </authorList>
    </citation>
    <scope>NUCLEOTIDE SEQUENCE [LARGE SCALE GENOMIC DNA]</scope>
    <source>
        <strain>RQ2</strain>
    </source>
</reference>
<dbReference type="EC" id="4.2.1.10" evidence="1"/>
<dbReference type="EMBL" id="CP000969">
    <property type="protein sequence ID" value="ACB08939.1"/>
    <property type="molecule type" value="Genomic_DNA"/>
</dbReference>
<dbReference type="RefSeq" id="WP_011943192.1">
    <property type="nucleotide sequence ID" value="NC_010483.1"/>
</dbReference>
<dbReference type="SMR" id="B1L9E1"/>
<dbReference type="KEGG" id="trq:TRQ2_0586"/>
<dbReference type="HOGENOM" id="CLU_090968_3_0_0"/>
<dbReference type="UniPathway" id="UPA00053">
    <property type="reaction ID" value="UER00086"/>
</dbReference>
<dbReference type="Proteomes" id="UP000001687">
    <property type="component" value="Chromosome"/>
</dbReference>
<dbReference type="GO" id="GO:0003855">
    <property type="term" value="F:3-dehydroquinate dehydratase activity"/>
    <property type="evidence" value="ECO:0007669"/>
    <property type="project" value="UniProtKB-UniRule"/>
</dbReference>
<dbReference type="GO" id="GO:0008652">
    <property type="term" value="P:amino acid biosynthetic process"/>
    <property type="evidence" value="ECO:0007669"/>
    <property type="project" value="UniProtKB-KW"/>
</dbReference>
<dbReference type="GO" id="GO:0009073">
    <property type="term" value="P:aromatic amino acid family biosynthetic process"/>
    <property type="evidence" value="ECO:0007669"/>
    <property type="project" value="UniProtKB-KW"/>
</dbReference>
<dbReference type="GO" id="GO:0009423">
    <property type="term" value="P:chorismate biosynthetic process"/>
    <property type="evidence" value="ECO:0007669"/>
    <property type="project" value="UniProtKB-UniRule"/>
</dbReference>
<dbReference type="GO" id="GO:0019631">
    <property type="term" value="P:quinate catabolic process"/>
    <property type="evidence" value="ECO:0007669"/>
    <property type="project" value="TreeGrafter"/>
</dbReference>
<dbReference type="CDD" id="cd00466">
    <property type="entry name" value="DHQase_II"/>
    <property type="match status" value="1"/>
</dbReference>
<dbReference type="Gene3D" id="3.40.50.9100">
    <property type="entry name" value="Dehydroquinase, class II"/>
    <property type="match status" value="1"/>
</dbReference>
<dbReference type="HAMAP" id="MF_00169">
    <property type="entry name" value="AroQ"/>
    <property type="match status" value="1"/>
</dbReference>
<dbReference type="InterPro" id="IPR001874">
    <property type="entry name" value="DHquinase_II"/>
</dbReference>
<dbReference type="InterPro" id="IPR018509">
    <property type="entry name" value="DHquinase_II_CS"/>
</dbReference>
<dbReference type="InterPro" id="IPR036441">
    <property type="entry name" value="DHquinase_II_sf"/>
</dbReference>
<dbReference type="NCBIfam" id="TIGR01088">
    <property type="entry name" value="aroQ"/>
    <property type="match status" value="1"/>
</dbReference>
<dbReference type="NCBIfam" id="NF003805">
    <property type="entry name" value="PRK05395.1-2"/>
    <property type="match status" value="1"/>
</dbReference>
<dbReference type="NCBIfam" id="NF003807">
    <property type="entry name" value="PRK05395.1-4"/>
    <property type="match status" value="1"/>
</dbReference>
<dbReference type="PANTHER" id="PTHR21272">
    <property type="entry name" value="CATABOLIC 3-DEHYDROQUINASE"/>
    <property type="match status" value="1"/>
</dbReference>
<dbReference type="PANTHER" id="PTHR21272:SF3">
    <property type="entry name" value="CATABOLIC 3-DEHYDROQUINASE"/>
    <property type="match status" value="1"/>
</dbReference>
<dbReference type="Pfam" id="PF01220">
    <property type="entry name" value="DHquinase_II"/>
    <property type="match status" value="1"/>
</dbReference>
<dbReference type="PIRSF" id="PIRSF001399">
    <property type="entry name" value="DHquinase_II"/>
    <property type="match status" value="1"/>
</dbReference>
<dbReference type="SUPFAM" id="SSF52304">
    <property type="entry name" value="Type II 3-dehydroquinate dehydratase"/>
    <property type="match status" value="1"/>
</dbReference>
<dbReference type="PROSITE" id="PS01029">
    <property type="entry name" value="DEHYDROQUINASE_II"/>
    <property type="match status" value="1"/>
</dbReference>
<proteinExistence type="inferred from homology"/>
<organism>
    <name type="scientific">Thermotoga sp. (strain RQ2)</name>
    <dbReference type="NCBI Taxonomy" id="126740"/>
    <lineage>
        <taxon>Bacteria</taxon>
        <taxon>Thermotogati</taxon>
        <taxon>Thermotogota</taxon>
        <taxon>Thermotogae</taxon>
        <taxon>Thermotogales</taxon>
        <taxon>Thermotogaceae</taxon>
        <taxon>Thermotoga</taxon>
    </lineage>
</organism>
<sequence>MKVLVVNGPNLNMLGKRDKNIYGNFSHEDLVKMIEDWGRKNDVEVEVFQSNHEGEILDRLHRLDFDGLVINPGAFTHYSYAIRDALEIVKVPKVEVHISNIHRREEFRRRSVTAEVCDGQISGLGVYGYLLALEYIKKKLEELT</sequence>
<keyword id="KW-0028">Amino-acid biosynthesis</keyword>
<keyword id="KW-0057">Aromatic amino acid biosynthesis</keyword>
<keyword id="KW-0456">Lyase</keyword>
<comment type="function">
    <text evidence="1">Catalyzes a trans-dehydration via an enolate intermediate.</text>
</comment>
<comment type="catalytic activity">
    <reaction evidence="1">
        <text>3-dehydroquinate = 3-dehydroshikimate + H2O</text>
        <dbReference type="Rhea" id="RHEA:21096"/>
        <dbReference type="ChEBI" id="CHEBI:15377"/>
        <dbReference type="ChEBI" id="CHEBI:16630"/>
        <dbReference type="ChEBI" id="CHEBI:32364"/>
        <dbReference type="EC" id="4.2.1.10"/>
    </reaction>
</comment>
<comment type="pathway">
    <text evidence="1">Metabolic intermediate biosynthesis; chorismate biosynthesis; chorismate from D-erythrose 4-phosphate and phosphoenolpyruvate: step 3/7.</text>
</comment>
<comment type="subunit">
    <text evidence="1">Homododecamer.</text>
</comment>
<comment type="similarity">
    <text evidence="1">Belongs to the type-II 3-dehydroquinase family.</text>
</comment>
<protein>
    <recommendedName>
        <fullName evidence="1">3-dehydroquinate dehydratase</fullName>
        <shortName evidence="1">3-dehydroquinase</shortName>
        <ecNumber evidence="1">4.2.1.10</ecNumber>
    </recommendedName>
    <alternativeName>
        <fullName evidence="1">Type II DHQase</fullName>
    </alternativeName>
</protein>
<name>AROQ_THESQ</name>